<keyword id="KW-0229">DNA integration</keyword>
<keyword id="KW-0233">DNA recombination</keyword>
<keyword id="KW-0238">DNA-binding</keyword>
<keyword id="KW-0614">Plasmid</keyword>
<keyword id="KW-1185">Reference proteome</keyword>
<reference key="1">
    <citation type="journal article" date="2002" name="Proc. Natl. Acad. Sci. U.S.A.">
        <title>Complete genome sequence of Clostridium perfringens, an anaerobic flesh-eater.</title>
        <authorList>
            <person name="Shimizu T."/>
            <person name="Ohtani K."/>
            <person name="Hirakawa H."/>
            <person name="Ohshima K."/>
            <person name="Yamashita A."/>
            <person name="Shiba T."/>
            <person name="Ogasawara N."/>
            <person name="Hattori M."/>
            <person name="Kuhara S."/>
            <person name="Hayashi H."/>
        </authorList>
    </citation>
    <scope>NUCLEOTIDE SEQUENCE [LARGE SCALE GENOMIC DNA]</scope>
    <source>
        <strain>13 / Type A</strain>
    </source>
</reference>
<gene>
    <name type="primary">res</name>
    <name type="synonym">resP</name>
    <name type="ordered locus">PCP15</name>
</gene>
<evidence type="ECO:0000255" key="1"/>
<evidence type="ECO:0000255" key="2">
    <source>
        <dbReference type="PROSITE-ProRule" id="PRU01072"/>
    </source>
</evidence>
<evidence type="ECO:0000256" key="3">
    <source>
        <dbReference type="SAM" id="MobiDB-lite"/>
    </source>
</evidence>
<evidence type="ECO:0000305" key="4"/>
<geneLocation type="plasmid">
    <name>pCP13</name>
</geneLocation>
<name>RES_CLOPE</name>
<proteinExistence type="inferred from homology"/>
<comment type="function">
    <text>A likely role for the res protein would be to stabilize pCP13 by reducing the number of plasmid multimers resulting from homologous recombination.</text>
</comment>
<comment type="similarity">
    <text evidence="4">Belongs to the site-specific recombinase resolvase family.</text>
</comment>
<accession>Q93MD2</accession>
<protein>
    <recommendedName>
        <fullName>Resolvase</fullName>
    </recommendedName>
</protein>
<feature type="chain" id="PRO_0000196365" description="Resolvase">
    <location>
        <begin position="1"/>
        <end position="189"/>
    </location>
</feature>
<feature type="domain" description="Resolvase/invertase-type recombinase catalytic" evidence="2">
    <location>
        <begin position="1"/>
        <end position="139"/>
    </location>
</feature>
<feature type="DNA-binding region" description="H-T-H motif" evidence="1">
    <location>
        <begin position="165"/>
        <end position="184"/>
    </location>
</feature>
<feature type="region of interest" description="Disordered" evidence="3">
    <location>
        <begin position="130"/>
        <end position="151"/>
    </location>
</feature>
<feature type="active site" description="O-(5'-phospho-DNA)-serine intermediate" evidence="2">
    <location>
        <position position="9"/>
    </location>
</feature>
<organism>
    <name type="scientific">Clostridium perfringens (strain 13 / Type A)</name>
    <dbReference type="NCBI Taxonomy" id="195102"/>
    <lineage>
        <taxon>Bacteria</taxon>
        <taxon>Bacillati</taxon>
        <taxon>Bacillota</taxon>
        <taxon>Clostridia</taxon>
        <taxon>Eubacteriales</taxon>
        <taxon>Clostridiaceae</taxon>
        <taxon>Clostridium</taxon>
    </lineage>
</organism>
<dbReference type="EMBL" id="AP003515">
    <property type="protein sequence ID" value="BAB62453.1"/>
    <property type="molecule type" value="Genomic_DNA"/>
</dbReference>
<dbReference type="RefSeq" id="WP_010968248.1">
    <property type="nucleotide sequence ID" value="NC_003042.1"/>
</dbReference>
<dbReference type="SMR" id="Q93MD2"/>
<dbReference type="GeneID" id="93000442"/>
<dbReference type="KEGG" id="cpe:resP"/>
<dbReference type="HOGENOM" id="CLU_010686_8_1_9"/>
<dbReference type="Proteomes" id="UP000000818">
    <property type="component" value="Plasmid pCP13"/>
</dbReference>
<dbReference type="GO" id="GO:0003677">
    <property type="term" value="F:DNA binding"/>
    <property type="evidence" value="ECO:0007669"/>
    <property type="project" value="UniProtKB-KW"/>
</dbReference>
<dbReference type="GO" id="GO:0000150">
    <property type="term" value="F:DNA strand exchange activity"/>
    <property type="evidence" value="ECO:0007669"/>
    <property type="project" value="InterPro"/>
</dbReference>
<dbReference type="GO" id="GO:0015074">
    <property type="term" value="P:DNA integration"/>
    <property type="evidence" value="ECO:0007669"/>
    <property type="project" value="UniProtKB-KW"/>
</dbReference>
<dbReference type="CDD" id="cd03768">
    <property type="entry name" value="SR_ResInv"/>
    <property type="match status" value="1"/>
</dbReference>
<dbReference type="Gene3D" id="1.10.10.60">
    <property type="entry name" value="Homeodomain-like"/>
    <property type="match status" value="1"/>
</dbReference>
<dbReference type="Gene3D" id="3.40.50.1390">
    <property type="entry name" value="Resolvase, N-terminal catalytic domain"/>
    <property type="match status" value="1"/>
</dbReference>
<dbReference type="InterPro" id="IPR009057">
    <property type="entry name" value="Homeodomain-like_sf"/>
</dbReference>
<dbReference type="InterPro" id="IPR006118">
    <property type="entry name" value="Recombinase_CS"/>
</dbReference>
<dbReference type="InterPro" id="IPR006119">
    <property type="entry name" value="Resolv_N"/>
</dbReference>
<dbReference type="InterPro" id="IPR036162">
    <property type="entry name" value="Resolvase-like_N_sf"/>
</dbReference>
<dbReference type="InterPro" id="IPR006120">
    <property type="entry name" value="Resolvase_HTH_dom"/>
</dbReference>
<dbReference type="InterPro" id="IPR050639">
    <property type="entry name" value="SSR_resolvase"/>
</dbReference>
<dbReference type="PANTHER" id="PTHR30461">
    <property type="entry name" value="DNA-INVERTASE FROM LAMBDOID PROPHAGE"/>
    <property type="match status" value="1"/>
</dbReference>
<dbReference type="PANTHER" id="PTHR30461:SF2">
    <property type="entry name" value="SERINE RECOMBINASE PINE-RELATED"/>
    <property type="match status" value="1"/>
</dbReference>
<dbReference type="Pfam" id="PF02796">
    <property type="entry name" value="HTH_7"/>
    <property type="match status" value="1"/>
</dbReference>
<dbReference type="Pfam" id="PF00239">
    <property type="entry name" value="Resolvase"/>
    <property type="match status" value="1"/>
</dbReference>
<dbReference type="SMART" id="SM00857">
    <property type="entry name" value="Resolvase"/>
    <property type="match status" value="1"/>
</dbReference>
<dbReference type="SUPFAM" id="SSF46689">
    <property type="entry name" value="Homeodomain-like"/>
    <property type="match status" value="1"/>
</dbReference>
<dbReference type="SUPFAM" id="SSF53041">
    <property type="entry name" value="Resolvase-like"/>
    <property type="match status" value="1"/>
</dbReference>
<dbReference type="PROSITE" id="PS00397">
    <property type="entry name" value="RECOMBINASES_1"/>
    <property type="match status" value="1"/>
</dbReference>
<dbReference type="PROSITE" id="PS00398">
    <property type="entry name" value="RECOMBINASES_2"/>
    <property type="match status" value="1"/>
</dbReference>
<dbReference type="PROSITE" id="PS51736">
    <property type="entry name" value="RECOMBINASES_3"/>
    <property type="match status" value="1"/>
</dbReference>
<sequence>MLVGYARVSTEGQSLNRQIDMLVDYGLDKRNIYQEKISGTKLRRDQLDKMIEELQEGDTVIITDLTRISRSTKDLLNIIDRIKEKGASIKSLKDTWLDTSGDNPYNSFLLTVMSGLSQLERDLISQRTKEGLRSAKARGRNGGRPSKRNDKADTVGLLYREGYKIVDIVKQTELSRATVYRILKDLNLK</sequence>